<reference key="1">
    <citation type="submission" date="2005-11" db="EMBL/GenBank/DDBJ databases">
        <authorList>
            <consortium name="NIH - Mammalian Gene Collection (MGC) project"/>
        </authorList>
    </citation>
    <scope>NUCLEOTIDE SEQUENCE [LARGE SCALE MRNA]</scope>
    <source>
        <strain>Crossbred X Angus</strain>
        <tissue>Liver</tissue>
    </source>
</reference>
<evidence type="ECO:0000250" key="1"/>
<evidence type="ECO:0000250" key="2">
    <source>
        <dbReference type="UniProtKB" id="Q6AYF9"/>
    </source>
</evidence>
<evidence type="ECO:0000250" key="3">
    <source>
        <dbReference type="UniProtKB" id="Q6NXR0"/>
    </source>
</evidence>
<evidence type="ECO:0000250" key="4">
    <source>
        <dbReference type="UniProtKB" id="Q8C262"/>
    </source>
</evidence>
<evidence type="ECO:0000255" key="5">
    <source>
        <dbReference type="PROSITE-ProRule" id="PRU01053"/>
    </source>
</evidence>
<evidence type="ECO:0000256" key="6">
    <source>
        <dbReference type="SAM" id="MobiDB-lite"/>
    </source>
</evidence>
<evidence type="ECO:0000305" key="7"/>
<keyword id="KW-0966">Cell projection</keyword>
<keyword id="KW-0969">Cilium</keyword>
<keyword id="KW-0282">Flagellum</keyword>
<keyword id="KW-0342">GTP-binding</keyword>
<keyword id="KW-0378">Hydrolase</keyword>
<keyword id="KW-0551">Lipid droplet</keyword>
<keyword id="KW-0547">Nucleotide-binding</keyword>
<keyword id="KW-0597">Phosphoprotein</keyword>
<keyword id="KW-1185">Reference proteome</keyword>
<organism>
    <name type="scientific">Bos taurus</name>
    <name type="common">Bovine</name>
    <dbReference type="NCBI Taxonomy" id="9913"/>
    <lineage>
        <taxon>Eukaryota</taxon>
        <taxon>Metazoa</taxon>
        <taxon>Chordata</taxon>
        <taxon>Craniata</taxon>
        <taxon>Vertebrata</taxon>
        <taxon>Euteleostomi</taxon>
        <taxon>Mammalia</taxon>
        <taxon>Eutheria</taxon>
        <taxon>Laurasiatheria</taxon>
        <taxon>Artiodactyla</taxon>
        <taxon>Ruminantia</taxon>
        <taxon>Pecora</taxon>
        <taxon>Bovidae</taxon>
        <taxon>Bovinae</taxon>
        <taxon>Bos</taxon>
    </lineage>
</organism>
<gene>
    <name type="primary">IRGC</name>
    <name type="synonym">IIGP5</name>
    <name type="synonym">IRGC1</name>
</gene>
<name>IIGP5_BOVIN</name>
<comment type="function">
    <text evidence="4">Required for sperm motility and therefore male fertility, via positive regulation of spermatozoa fibrous sheath formation.</text>
</comment>
<comment type="catalytic activity">
    <reaction>
        <text>GTP + H2O = GDP + phosphate + H(+)</text>
        <dbReference type="Rhea" id="RHEA:19669"/>
        <dbReference type="ChEBI" id="CHEBI:15377"/>
        <dbReference type="ChEBI" id="CHEBI:15378"/>
        <dbReference type="ChEBI" id="CHEBI:37565"/>
        <dbReference type="ChEBI" id="CHEBI:43474"/>
        <dbReference type="ChEBI" id="CHEBI:58189"/>
    </reaction>
</comment>
<comment type="subcellular location">
    <subcellularLocation>
        <location evidence="3">Cell projection</location>
        <location evidence="3">Cilium</location>
        <location evidence="3">Flagellum</location>
    </subcellularLocation>
    <subcellularLocation>
        <location evidence="3">Lipid droplet</location>
    </subcellularLocation>
    <text evidence="3">Expressed in the sperm mitochondrial sheath.</text>
</comment>
<comment type="similarity">
    <text evidence="5 7">Belongs to the TRAFAC class dynamin-like GTPase superfamily. IRG family.</text>
</comment>
<protein>
    <recommendedName>
        <fullName>Interferon-inducible GTPase 5</fullName>
        <ecNumber>3.6.5.-</ecNumber>
    </recommendedName>
    <alternativeName>
        <fullName>Immunity-related GTPase cinema 1</fullName>
    </alternativeName>
</protein>
<proteinExistence type="evidence at transcript level"/>
<accession>Q32KW9</accession>
<feature type="chain" id="PRO_0000285264" description="Interferon-inducible GTPase 5">
    <location>
        <begin position="1"/>
        <end position="465"/>
    </location>
</feature>
<feature type="domain" description="IRG-type G" evidence="5">
    <location>
        <begin position="53"/>
        <end position="235"/>
    </location>
</feature>
<feature type="region of interest" description="Disordered" evidence="6">
    <location>
        <begin position="405"/>
        <end position="438"/>
    </location>
</feature>
<feature type="binding site" evidence="1">
    <location>
        <begin position="62"/>
        <end position="69"/>
    </location>
    <ligand>
        <name>GTP</name>
        <dbReference type="ChEBI" id="CHEBI:37565"/>
    </ligand>
</feature>
<feature type="binding site" evidence="1">
    <location>
        <begin position="87"/>
        <end position="91"/>
    </location>
    <ligand>
        <name>GTP</name>
        <dbReference type="ChEBI" id="CHEBI:37565"/>
    </ligand>
</feature>
<feature type="binding site" evidence="1">
    <location>
        <begin position="169"/>
        <end position="171"/>
    </location>
    <ligand>
        <name>GTP</name>
        <dbReference type="ChEBI" id="CHEBI:37565"/>
    </ligand>
</feature>
<feature type="binding site" evidence="1">
    <location>
        <begin position="216"/>
        <end position="218"/>
    </location>
    <ligand>
        <name>GTP</name>
        <dbReference type="ChEBI" id="CHEBI:37565"/>
    </ligand>
</feature>
<feature type="modified residue" description="Phosphoserine" evidence="2">
    <location>
        <position position="247"/>
    </location>
</feature>
<feature type="modified residue" description="Phosphoserine" evidence="2">
    <location>
        <position position="304"/>
    </location>
</feature>
<dbReference type="EC" id="3.6.5.-"/>
<dbReference type="EMBL" id="BC109879">
    <property type="protein sequence ID" value="AAI09880.1"/>
    <property type="molecule type" value="mRNA"/>
</dbReference>
<dbReference type="RefSeq" id="NP_001069614.1">
    <property type="nucleotide sequence ID" value="NM_001076146.2"/>
</dbReference>
<dbReference type="SMR" id="Q32KW9"/>
<dbReference type="FunCoup" id="Q32KW9">
    <property type="interactions" value="100"/>
</dbReference>
<dbReference type="STRING" id="9913.ENSBTAP00000018295"/>
<dbReference type="PaxDb" id="9913-ENSBTAP00000018295"/>
<dbReference type="GeneID" id="539080"/>
<dbReference type="KEGG" id="bta:539080"/>
<dbReference type="CTD" id="56269"/>
<dbReference type="eggNOG" id="ENOG502QS9R">
    <property type="taxonomic scope" value="Eukaryota"/>
</dbReference>
<dbReference type="InParanoid" id="Q32KW9"/>
<dbReference type="OrthoDB" id="422720at2759"/>
<dbReference type="Proteomes" id="UP000009136">
    <property type="component" value="Unplaced"/>
</dbReference>
<dbReference type="GO" id="GO:0005811">
    <property type="term" value="C:lipid droplet"/>
    <property type="evidence" value="ECO:0000250"/>
    <property type="project" value="UniProtKB"/>
</dbReference>
<dbReference type="GO" id="GO:0016020">
    <property type="term" value="C:membrane"/>
    <property type="evidence" value="ECO:0007669"/>
    <property type="project" value="InterPro"/>
</dbReference>
<dbReference type="GO" id="GO:0036126">
    <property type="term" value="C:sperm flagellum"/>
    <property type="evidence" value="ECO:0000250"/>
    <property type="project" value="UniProtKB"/>
</dbReference>
<dbReference type="GO" id="GO:0097226">
    <property type="term" value="C:sperm mitochondrial sheath"/>
    <property type="evidence" value="ECO:0000250"/>
    <property type="project" value="UniProtKB"/>
</dbReference>
<dbReference type="GO" id="GO:0005525">
    <property type="term" value="F:GTP binding"/>
    <property type="evidence" value="ECO:0007669"/>
    <property type="project" value="UniProtKB-KW"/>
</dbReference>
<dbReference type="GO" id="GO:0003924">
    <property type="term" value="F:GTPase activity"/>
    <property type="evidence" value="ECO:0007669"/>
    <property type="project" value="RHEA"/>
</dbReference>
<dbReference type="GO" id="GO:1902093">
    <property type="term" value="P:positive regulation of flagellated sperm motility"/>
    <property type="evidence" value="ECO:0000250"/>
    <property type="project" value="UniProtKB"/>
</dbReference>
<dbReference type="CDD" id="cd04104">
    <property type="entry name" value="p47_IIGP_like"/>
    <property type="match status" value="1"/>
</dbReference>
<dbReference type="FunFam" id="3.40.50.300:FF:000541">
    <property type="entry name" value="Immunity related GTPase M"/>
    <property type="match status" value="1"/>
</dbReference>
<dbReference type="Gene3D" id="3.40.50.300">
    <property type="entry name" value="P-loop containing nucleotide triphosphate hydrolases"/>
    <property type="match status" value="1"/>
</dbReference>
<dbReference type="InterPro" id="IPR030385">
    <property type="entry name" value="G_IRG_dom"/>
</dbReference>
<dbReference type="InterPro" id="IPR007743">
    <property type="entry name" value="Immunity-related_GTPase-like"/>
</dbReference>
<dbReference type="InterPro" id="IPR051515">
    <property type="entry name" value="IRG"/>
</dbReference>
<dbReference type="InterPro" id="IPR027417">
    <property type="entry name" value="P-loop_NTPase"/>
</dbReference>
<dbReference type="PANTHER" id="PTHR32341">
    <property type="entry name" value="INTERFERON-INDUCIBLE GTPASE"/>
    <property type="match status" value="1"/>
</dbReference>
<dbReference type="PANTHER" id="PTHR32341:SF10">
    <property type="entry name" value="INTERFERON-INDUCIBLE GTPASE 5"/>
    <property type="match status" value="1"/>
</dbReference>
<dbReference type="Pfam" id="PF05049">
    <property type="entry name" value="IIGP"/>
    <property type="match status" value="1"/>
</dbReference>
<dbReference type="SUPFAM" id="SSF52540">
    <property type="entry name" value="P-loop containing nucleoside triphosphate hydrolases"/>
    <property type="match status" value="1"/>
</dbReference>
<dbReference type="PROSITE" id="PS51716">
    <property type="entry name" value="G_IRG"/>
    <property type="match status" value="1"/>
</dbReference>
<sequence>MATSKLPAVSGEEETTILMAKEELEALRTAFESGDIPQAASRLRELLASSDCTRLEVGVTGESGAGKSSLINALRGLGAEDPDAALTGVVETTIEPSPYPHPQFPDVTLWDLPGAGSPGCSADKYLKQVDFGRYDFFLLVSPRRCGAVETRLASEILRQGKKFYFVRTKVDEDLAATRMQRPSGFSEGAVLHEIREHCVERLRGAGVHDPRVFLVSNLSPARYDFPLLMSTWERDLPAHRRHAGLLSLPDISLEALQEKKDMLQEQVLKTALVSGVIQALPVPGLAAAYDDALLIRSLRGYHRSFGLDDDSLAKLAEQVGKQAGDLRSVIRSPLANEVSPETVLRLYSQSSDGAMRVARAFEKGIPVFGTLVAGGISFGTVYTMLQGCLNEMAEDAQRVRIKALEEEEDTQPDVSLEAAGDNGVEKRGSGEGSMEEAPLSTRRKLGLLLKYILDSWKKRDLAEDK</sequence>